<accession>P0C9A5</accession>
<evidence type="ECO:0000250" key="1">
    <source>
        <dbReference type="UniProtKB" id="P04308"/>
    </source>
</evidence>
<evidence type="ECO:0000250" key="2">
    <source>
        <dbReference type="UniProtKB" id="Q89525"/>
    </source>
</evidence>
<evidence type="ECO:0000255" key="3">
    <source>
        <dbReference type="PROSITE-ProRule" id="PRU00541"/>
    </source>
</evidence>
<evidence type="ECO:0000255" key="4">
    <source>
        <dbReference type="PROSITE-ProRule" id="PRU00542"/>
    </source>
</evidence>
<evidence type="ECO:0000305" key="5"/>
<proteinExistence type="inferred from homology"/>
<protein>
    <recommendedName>
        <fullName evidence="2">Early transcription factor large subunit homolog</fullName>
        <ecNumber>3.6.4.13</ecNumber>
    </recommendedName>
    <alternativeName>
        <fullName evidence="2">ATP-dependent helicase VETFS homolog</fullName>
    </alternativeName>
</protein>
<feature type="chain" id="PRO_0000373109" description="Early transcription factor large subunit homolog">
    <location>
        <begin position="1"/>
        <end position="1133"/>
    </location>
</feature>
<feature type="domain" description="Helicase ATP-binding" evidence="3">
    <location>
        <begin position="52"/>
        <end position="352"/>
    </location>
</feature>
<feature type="domain" description="Helicase C-terminal" evidence="4">
    <location>
        <begin position="524"/>
        <end position="724"/>
    </location>
</feature>
<feature type="short sequence motif" description="DEAH box">
    <location>
        <begin position="281"/>
        <end position="284"/>
    </location>
</feature>
<feature type="binding site" evidence="3">
    <location>
        <begin position="99"/>
        <end position="106"/>
    </location>
    <ligand>
        <name>ATP</name>
        <dbReference type="ChEBI" id="CHEBI:30616"/>
    </ligand>
</feature>
<organism>
    <name type="scientific">African swine fever virus (isolate Tick/South Africa/Pretoriuskop Pr4/1996)</name>
    <name type="common">ASFV</name>
    <dbReference type="NCBI Taxonomy" id="561443"/>
    <lineage>
        <taxon>Viruses</taxon>
        <taxon>Varidnaviria</taxon>
        <taxon>Bamfordvirae</taxon>
        <taxon>Nucleocytoviricota</taxon>
        <taxon>Pokkesviricetes</taxon>
        <taxon>Asfuvirales</taxon>
        <taxon>Asfarviridae</taxon>
        <taxon>Asfivirus</taxon>
        <taxon>African swine fever virus</taxon>
    </lineage>
</organism>
<gene>
    <name type="ordered locus">Pret-118</name>
</gene>
<name>VF113_ASFP4</name>
<sequence>MAYPELDAADFLQQLARRKEFKSLISPPVDQKELIRDLRAHFVQIGGPGCEKGGRAFFPCDPYASPFPSIKGLQLHNAQLFVQNFQNPNTPYSRLLLNWQTGTGKSIAAIAIARQFMNHYMNFIENAPWIFVVGFTRAIIQTEMLRRPELGFVSYKEVAELHRLLHIAKQSGSTTSVESRHLNGFVSTLKRRLTDRNRGGFFQFYGYKEFASKLFNITSKGEEKNFDVLSLFHRSDEAEDTLNENDISQFVQKISEAETNGLIRVNQKIMEQLRGGLLIADEIHNVYNIQERNNYGIALQYVLDAFPPHQAPRAVFMSATPVTGSVMEYVDLLNLLVPRHELPNGQPLQRQQLFDSSGHSVKWKKDALALVERLSTGRVSFLLDTNTNFYPERIFAGKMLSYKDEKLPYLHFIECPMSEYQLETLKQLGPDPKISSNAYSIYDMVFPNPKFSKQTEPKAYGLFNSTETPTALSMASTDWLLENGVQIIEPSRRAPFNVSGSFLSLQPPTHISGLAFYSGKYTQMMKDILSIIRQGRGKILIYHNRVRMSGVLILQEILQSNGILNEVSSPVGTTRCSICAAIRDDHTHSDHQFIPVRFTILHSEIEPAVRERSLALFNASSNLEGHQLRILIGSKVIVEGLNFQAVRYEMIMSLPLDIPRLIQVFGRVVRKNSHMELPPSERNVTIYLYVSTTPDGGPELAKYAQKLKEYILIQEGDKALRKHAIDGFTNQIKIDKPMLESLPLSPSITPANVGATVLNTFEAYGYGEQEVKTISNIIISLFMARPVWTYSELWKAVSTPKLIQGITIDNKLFSEDNFALALISLCYSKNQCKELWIQNRLCTIMHVPAKPEHLYVAAVLNHKKEPVLDIETYIRDFQPPTMHSIRITKYLEHSQTKEPFQVLYEKFQKDFQDEPMEQVLIHYPASFHYTMLEALIIDNLAGMGALVEVYKKFFIAFSKKDIQPFPDIFKIISHVPGDDNTLVGYATEDSVRLITSREDKTWHEIPLYMLNINVKRKENDIVIGYMESKGKALKFKIRPPIQVLKKNEITDIRMLNRGAVCETRGREEQQKIANQLGISLNLTKISAIKLCLLIRNNLLQKEMEARNQPNGMQDGIRWFYLFNDKMPSLVHTS</sequence>
<dbReference type="EC" id="3.6.4.13"/>
<dbReference type="EMBL" id="AY261363">
    <property type="status" value="NOT_ANNOTATED_CDS"/>
    <property type="molecule type" value="Genomic_DNA"/>
</dbReference>
<dbReference type="Proteomes" id="UP000000859">
    <property type="component" value="Segment"/>
</dbReference>
<dbReference type="GO" id="GO:0044423">
    <property type="term" value="C:virion component"/>
    <property type="evidence" value="ECO:0007669"/>
    <property type="project" value="UniProtKB-KW"/>
</dbReference>
<dbReference type="GO" id="GO:0005524">
    <property type="term" value="F:ATP binding"/>
    <property type="evidence" value="ECO:0007669"/>
    <property type="project" value="UniProtKB-KW"/>
</dbReference>
<dbReference type="GO" id="GO:0016887">
    <property type="term" value="F:ATP hydrolysis activity"/>
    <property type="evidence" value="ECO:0007669"/>
    <property type="project" value="RHEA"/>
</dbReference>
<dbReference type="GO" id="GO:0003724">
    <property type="term" value="F:RNA helicase activity"/>
    <property type="evidence" value="ECO:0007669"/>
    <property type="project" value="UniProtKB-EC"/>
</dbReference>
<dbReference type="Gene3D" id="3.40.50.300">
    <property type="entry name" value="P-loop containing nucleotide triphosphate hydrolases"/>
    <property type="match status" value="2"/>
</dbReference>
<dbReference type="InterPro" id="IPR001650">
    <property type="entry name" value="Helicase_C-like"/>
</dbReference>
<dbReference type="InterPro" id="IPR027417">
    <property type="entry name" value="P-loop_NTPase"/>
</dbReference>
<dbReference type="Pfam" id="PF00271">
    <property type="entry name" value="Helicase_C"/>
    <property type="match status" value="1"/>
</dbReference>
<dbReference type="SMART" id="SM00490">
    <property type="entry name" value="HELICc"/>
    <property type="match status" value="1"/>
</dbReference>
<dbReference type="SUPFAM" id="SSF52540">
    <property type="entry name" value="P-loop containing nucleoside triphosphate hydrolases"/>
    <property type="match status" value="1"/>
</dbReference>
<dbReference type="PROSITE" id="PS51192">
    <property type="entry name" value="HELICASE_ATP_BIND_1"/>
    <property type="match status" value="1"/>
</dbReference>
<dbReference type="PROSITE" id="PS51194">
    <property type="entry name" value="HELICASE_CTER"/>
    <property type="match status" value="1"/>
</dbReference>
<comment type="function">
    <text evidence="1">Putative initation factor.</text>
</comment>
<comment type="catalytic activity">
    <reaction evidence="1">
        <text>ATP + H2O = ADP + phosphate + H(+)</text>
        <dbReference type="Rhea" id="RHEA:13065"/>
        <dbReference type="ChEBI" id="CHEBI:15377"/>
        <dbReference type="ChEBI" id="CHEBI:15378"/>
        <dbReference type="ChEBI" id="CHEBI:30616"/>
        <dbReference type="ChEBI" id="CHEBI:43474"/>
        <dbReference type="ChEBI" id="CHEBI:456216"/>
        <dbReference type="EC" id="3.6.4.13"/>
    </reaction>
</comment>
<comment type="subcellular location">
    <subcellularLocation>
        <location evidence="2">Virion</location>
    </subcellularLocation>
    <text evidence="2">Found in association with viral nucleoid.</text>
</comment>
<comment type="induction">
    <text evidence="5">Expressed in the late phase of the viral replicative cycle.</text>
</comment>
<comment type="similarity">
    <text evidence="5">Belongs to the DEAD box helicase family. DEAH subfamily.</text>
</comment>
<keyword id="KW-0067">ATP-binding</keyword>
<keyword id="KW-0347">Helicase</keyword>
<keyword id="KW-0378">Hydrolase</keyword>
<keyword id="KW-0426">Late protein</keyword>
<keyword id="KW-0547">Nucleotide-binding</keyword>
<keyword id="KW-0804">Transcription</keyword>
<keyword id="KW-0805">Transcription regulation</keyword>
<keyword id="KW-0946">Virion</keyword>
<reference key="1">
    <citation type="submission" date="2003-03" db="EMBL/GenBank/DDBJ databases">
        <title>African swine fever virus genomes.</title>
        <authorList>
            <person name="Kutish G.F."/>
            <person name="Rock D.L."/>
        </authorList>
    </citation>
    <scope>NUCLEOTIDE SEQUENCE [GENOMIC DNA]</scope>
</reference>
<organismHost>
    <name type="scientific">Ornithodoros</name>
    <name type="common">relapsing fever ticks</name>
    <dbReference type="NCBI Taxonomy" id="6937"/>
</organismHost>
<organismHost>
    <name type="scientific">Phacochoerus aethiopicus</name>
    <name type="common">Warthog</name>
    <dbReference type="NCBI Taxonomy" id="85517"/>
</organismHost>
<organismHost>
    <name type="scientific">Phacochoerus africanus</name>
    <name type="common">Warthog</name>
    <dbReference type="NCBI Taxonomy" id="41426"/>
</organismHost>
<organismHost>
    <name type="scientific">Potamochoerus larvatus</name>
    <name type="common">Bushpig</name>
    <dbReference type="NCBI Taxonomy" id="273792"/>
</organismHost>
<organismHost>
    <name type="scientific">Sus scrofa</name>
    <name type="common">Pig</name>
    <dbReference type="NCBI Taxonomy" id="9823"/>
</organismHost>